<feature type="chain" id="PRO_0000127351" description="Myogenic factor 6">
    <location>
        <begin position="1"/>
        <end position="242"/>
    </location>
</feature>
<feature type="domain" description="bHLH" evidence="2">
    <location>
        <begin position="93"/>
        <end position="144"/>
    </location>
</feature>
<feature type="region of interest" description="Disordered" evidence="3">
    <location>
        <begin position="31"/>
        <end position="63"/>
    </location>
</feature>
<feature type="sequence variant" id="VAR_004493" description="In dbSNP:rs138296448." evidence="5">
    <original>A</original>
    <variation>D</variation>
    <location>
        <position position="90"/>
    </location>
</feature>
<feature type="sequence variant" id="VAR_004494" description="Found in patients with muscular disease; uncertain significance; dbSNP:rs28928909." evidence="4 5">
    <original>A</original>
    <variation>S</variation>
    <location>
        <position position="112"/>
    </location>
</feature>
<feature type="sequence conflict" description="In Ref. 3; CAG46563." evidence="6" ref="3">
    <original>P</original>
    <variation>S</variation>
    <location>
        <position position="169"/>
    </location>
</feature>
<organism>
    <name type="scientific">Homo sapiens</name>
    <name type="common">Human</name>
    <dbReference type="NCBI Taxonomy" id="9606"/>
    <lineage>
        <taxon>Eukaryota</taxon>
        <taxon>Metazoa</taxon>
        <taxon>Chordata</taxon>
        <taxon>Craniata</taxon>
        <taxon>Vertebrata</taxon>
        <taxon>Euteleostomi</taxon>
        <taxon>Mammalia</taxon>
        <taxon>Eutheria</taxon>
        <taxon>Euarchontoglires</taxon>
        <taxon>Primates</taxon>
        <taxon>Haplorrhini</taxon>
        <taxon>Catarrhini</taxon>
        <taxon>Hominidae</taxon>
        <taxon>Homo</taxon>
    </lineage>
</organism>
<dbReference type="EMBL" id="X52011">
    <property type="protein sequence ID" value="CAA36260.1"/>
    <property type="molecule type" value="mRNA"/>
</dbReference>
<dbReference type="EMBL" id="CR407641">
    <property type="protein sequence ID" value="CAG28569.1"/>
    <property type="molecule type" value="mRNA"/>
</dbReference>
<dbReference type="EMBL" id="CR541763">
    <property type="protein sequence ID" value="CAG46563.1"/>
    <property type="molecule type" value="mRNA"/>
</dbReference>
<dbReference type="EMBL" id="AK313287">
    <property type="protein sequence ID" value="BAG36095.1"/>
    <property type="molecule type" value="mRNA"/>
</dbReference>
<dbReference type="EMBL" id="CH471054">
    <property type="protein sequence ID" value="EAW97367.1"/>
    <property type="molecule type" value="Genomic_DNA"/>
</dbReference>
<dbReference type="EMBL" id="BC017834">
    <property type="protein sequence ID" value="AAH17834.1"/>
    <property type="molecule type" value="mRNA"/>
</dbReference>
<dbReference type="CCDS" id="CCDS9019.1"/>
<dbReference type="PIR" id="S12385">
    <property type="entry name" value="S12385"/>
</dbReference>
<dbReference type="RefSeq" id="NP_002460.1">
    <property type="nucleotide sequence ID" value="NM_002469.3"/>
</dbReference>
<dbReference type="SMR" id="P23409"/>
<dbReference type="BioGRID" id="110703">
    <property type="interactions" value="15"/>
</dbReference>
<dbReference type="FunCoup" id="P23409">
    <property type="interactions" value="132"/>
</dbReference>
<dbReference type="IntAct" id="P23409">
    <property type="interactions" value="13"/>
</dbReference>
<dbReference type="MINT" id="P23409"/>
<dbReference type="STRING" id="9606.ENSP00000228641"/>
<dbReference type="iPTMnet" id="P23409"/>
<dbReference type="PhosphoSitePlus" id="P23409"/>
<dbReference type="BioMuta" id="MYF6"/>
<dbReference type="DMDM" id="127630"/>
<dbReference type="jPOST" id="P23409"/>
<dbReference type="MassIVE" id="P23409"/>
<dbReference type="PaxDb" id="9606-ENSP00000228641"/>
<dbReference type="PeptideAtlas" id="P23409"/>
<dbReference type="ProteomicsDB" id="54088"/>
<dbReference type="Antibodypedia" id="17294">
    <property type="antibodies" value="254 antibodies from 32 providers"/>
</dbReference>
<dbReference type="DNASU" id="4618"/>
<dbReference type="Ensembl" id="ENST00000228641.4">
    <property type="protein sequence ID" value="ENSP00000228641.3"/>
    <property type="gene ID" value="ENSG00000111046.4"/>
</dbReference>
<dbReference type="GeneID" id="4618"/>
<dbReference type="KEGG" id="hsa:4618"/>
<dbReference type="MANE-Select" id="ENST00000228641.4">
    <property type="protein sequence ID" value="ENSP00000228641.3"/>
    <property type="RefSeq nucleotide sequence ID" value="NM_002469.3"/>
    <property type="RefSeq protein sequence ID" value="NP_002460.1"/>
</dbReference>
<dbReference type="UCSC" id="uc001szf.3">
    <property type="organism name" value="human"/>
</dbReference>
<dbReference type="AGR" id="HGNC:7566"/>
<dbReference type="CTD" id="4618"/>
<dbReference type="DisGeNET" id="4618"/>
<dbReference type="GeneCards" id="MYF6"/>
<dbReference type="HGNC" id="HGNC:7566">
    <property type="gene designation" value="MYF6"/>
</dbReference>
<dbReference type="HPA" id="ENSG00000111046">
    <property type="expression patterns" value="Group enriched (skeletal muscle, tongue)"/>
</dbReference>
<dbReference type="MalaCards" id="MYF6"/>
<dbReference type="MIM" id="159991">
    <property type="type" value="gene"/>
</dbReference>
<dbReference type="neXtProt" id="NX_P23409"/>
<dbReference type="OpenTargets" id="ENSG00000111046"/>
<dbReference type="Orphanet" id="169189">
    <property type="disease" value="Autosomal dominant centronuclear myopathy"/>
</dbReference>
<dbReference type="PharmGKB" id="PA31364"/>
<dbReference type="VEuPathDB" id="HostDB:ENSG00000111046"/>
<dbReference type="eggNOG" id="KOG3960">
    <property type="taxonomic scope" value="Eukaryota"/>
</dbReference>
<dbReference type="GeneTree" id="ENSGT00950000182959"/>
<dbReference type="HOGENOM" id="CLU_100258_0_0_1"/>
<dbReference type="InParanoid" id="P23409"/>
<dbReference type="OMA" id="SPCQDQI"/>
<dbReference type="OrthoDB" id="10049614at2759"/>
<dbReference type="PAN-GO" id="P23409">
    <property type="GO annotations" value="6 GO annotations based on evolutionary models"/>
</dbReference>
<dbReference type="PhylomeDB" id="P23409"/>
<dbReference type="TreeFam" id="TF316344"/>
<dbReference type="PathwayCommons" id="P23409"/>
<dbReference type="Reactome" id="R-HSA-525793">
    <property type="pathway name" value="Myogenesis"/>
</dbReference>
<dbReference type="Reactome" id="R-HSA-9839394">
    <property type="pathway name" value="TGFBR3 expression"/>
</dbReference>
<dbReference type="SignaLink" id="P23409"/>
<dbReference type="SIGNOR" id="P23409"/>
<dbReference type="BioGRID-ORCS" id="4618">
    <property type="hits" value="11 hits in 1167 CRISPR screens"/>
</dbReference>
<dbReference type="GenomeRNAi" id="4618"/>
<dbReference type="Pharos" id="P23409">
    <property type="development level" value="Tbio"/>
</dbReference>
<dbReference type="PRO" id="PR:P23409"/>
<dbReference type="Proteomes" id="UP000005640">
    <property type="component" value="Chromosome 12"/>
</dbReference>
<dbReference type="RNAct" id="P23409">
    <property type="molecule type" value="protein"/>
</dbReference>
<dbReference type="Bgee" id="ENSG00000111046">
    <property type="expression patterns" value="Expressed in gluteal muscle and 107 other cell types or tissues"/>
</dbReference>
<dbReference type="GO" id="GO:0000785">
    <property type="term" value="C:chromatin"/>
    <property type="evidence" value="ECO:0000247"/>
    <property type="project" value="NTNU_SB"/>
</dbReference>
<dbReference type="GO" id="GO:0005829">
    <property type="term" value="C:cytosol"/>
    <property type="evidence" value="ECO:0000314"/>
    <property type="project" value="HPA"/>
</dbReference>
<dbReference type="GO" id="GO:0072686">
    <property type="term" value="C:mitotic spindle"/>
    <property type="evidence" value="ECO:0000314"/>
    <property type="project" value="HPA"/>
</dbReference>
<dbReference type="GO" id="GO:0005654">
    <property type="term" value="C:nucleoplasm"/>
    <property type="evidence" value="ECO:0000314"/>
    <property type="project" value="HPA"/>
</dbReference>
<dbReference type="GO" id="GO:0005634">
    <property type="term" value="C:nucleus"/>
    <property type="evidence" value="ECO:0000304"/>
    <property type="project" value="ProtInc"/>
</dbReference>
<dbReference type="GO" id="GO:0090575">
    <property type="term" value="C:RNA polymerase II transcription regulator complex"/>
    <property type="evidence" value="ECO:0000250"/>
    <property type="project" value="BHF-UCL"/>
</dbReference>
<dbReference type="GO" id="GO:0001228">
    <property type="term" value="F:DNA-binding transcription activator activity, RNA polymerase II-specific"/>
    <property type="evidence" value="ECO:0007669"/>
    <property type="project" value="Ensembl"/>
</dbReference>
<dbReference type="GO" id="GO:0003700">
    <property type="term" value="F:DNA-binding transcription factor activity"/>
    <property type="evidence" value="ECO:0000304"/>
    <property type="project" value="ProtInc"/>
</dbReference>
<dbReference type="GO" id="GO:0000981">
    <property type="term" value="F:DNA-binding transcription factor activity, RNA polymerase II-specific"/>
    <property type="evidence" value="ECO:0000247"/>
    <property type="project" value="NTNU_SB"/>
</dbReference>
<dbReference type="GO" id="GO:0046983">
    <property type="term" value="F:protein dimerization activity"/>
    <property type="evidence" value="ECO:0007669"/>
    <property type="project" value="InterPro"/>
</dbReference>
<dbReference type="GO" id="GO:0000978">
    <property type="term" value="F:RNA polymerase II cis-regulatory region sequence-specific DNA binding"/>
    <property type="evidence" value="ECO:0000318"/>
    <property type="project" value="GO_Central"/>
</dbReference>
<dbReference type="GO" id="GO:1990837">
    <property type="term" value="F:sequence-specific double-stranded DNA binding"/>
    <property type="evidence" value="ECO:0000314"/>
    <property type="project" value="ARUK-UCL"/>
</dbReference>
<dbReference type="GO" id="GO:0042693">
    <property type="term" value="P:muscle cell fate commitment"/>
    <property type="evidence" value="ECO:0000250"/>
    <property type="project" value="BHF-UCL"/>
</dbReference>
<dbReference type="GO" id="GO:0060415">
    <property type="term" value="P:muscle tissue morphogenesis"/>
    <property type="evidence" value="ECO:0007669"/>
    <property type="project" value="Ensembl"/>
</dbReference>
<dbReference type="GO" id="GO:0045892">
    <property type="term" value="P:negative regulation of DNA-templated transcription"/>
    <property type="evidence" value="ECO:0007669"/>
    <property type="project" value="Ensembl"/>
</dbReference>
<dbReference type="GO" id="GO:0045663">
    <property type="term" value="P:positive regulation of myoblast differentiation"/>
    <property type="evidence" value="ECO:0000318"/>
    <property type="project" value="GO_Central"/>
</dbReference>
<dbReference type="GO" id="GO:0048743">
    <property type="term" value="P:positive regulation of skeletal muscle fiber development"/>
    <property type="evidence" value="ECO:0000318"/>
    <property type="project" value="GO_Central"/>
</dbReference>
<dbReference type="GO" id="GO:0045944">
    <property type="term" value="P:positive regulation of transcription by RNA polymerase II"/>
    <property type="evidence" value="ECO:0000250"/>
    <property type="project" value="BHF-UCL"/>
</dbReference>
<dbReference type="GO" id="GO:0006357">
    <property type="term" value="P:regulation of transcription by RNA polymerase II"/>
    <property type="evidence" value="ECO:0000318"/>
    <property type="project" value="GO_Central"/>
</dbReference>
<dbReference type="GO" id="GO:0035914">
    <property type="term" value="P:skeletal muscle cell differentiation"/>
    <property type="evidence" value="ECO:0000318"/>
    <property type="project" value="GO_Central"/>
</dbReference>
<dbReference type="GO" id="GO:0007519">
    <property type="term" value="P:skeletal muscle tissue development"/>
    <property type="evidence" value="ECO:0000304"/>
    <property type="project" value="ProtInc"/>
</dbReference>
<dbReference type="GO" id="GO:0043403">
    <property type="term" value="P:skeletal muscle tissue regeneration"/>
    <property type="evidence" value="ECO:0007669"/>
    <property type="project" value="Ensembl"/>
</dbReference>
<dbReference type="GO" id="GO:0001756">
    <property type="term" value="P:somitogenesis"/>
    <property type="evidence" value="ECO:0007669"/>
    <property type="project" value="Ensembl"/>
</dbReference>
<dbReference type="CDD" id="cd18934">
    <property type="entry name" value="bHLH_TS_MRF4_Myf6"/>
    <property type="match status" value="1"/>
</dbReference>
<dbReference type="FunFam" id="4.10.280.10:FF:000005">
    <property type="entry name" value="Myogenic factor"/>
    <property type="match status" value="1"/>
</dbReference>
<dbReference type="Gene3D" id="4.10.280.10">
    <property type="entry name" value="Helix-loop-helix DNA-binding domain"/>
    <property type="match status" value="1"/>
</dbReference>
<dbReference type="InterPro" id="IPR011598">
    <property type="entry name" value="bHLH_dom"/>
</dbReference>
<dbReference type="InterPro" id="IPR036638">
    <property type="entry name" value="HLH_DNA-bd_sf"/>
</dbReference>
<dbReference type="InterPro" id="IPR002546">
    <property type="entry name" value="MyoD_N"/>
</dbReference>
<dbReference type="InterPro" id="IPR039704">
    <property type="entry name" value="Myogenic_factor"/>
</dbReference>
<dbReference type="PANTHER" id="PTHR11534">
    <property type="entry name" value="MYOGENIC FACTOR"/>
    <property type="match status" value="1"/>
</dbReference>
<dbReference type="PANTHER" id="PTHR11534:SF4">
    <property type="entry name" value="MYOGENIC FACTOR 6"/>
    <property type="match status" value="1"/>
</dbReference>
<dbReference type="Pfam" id="PF01586">
    <property type="entry name" value="Basic"/>
    <property type="match status" value="1"/>
</dbReference>
<dbReference type="Pfam" id="PF00010">
    <property type="entry name" value="HLH"/>
    <property type="match status" value="1"/>
</dbReference>
<dbReference type="SMART" id="SM00520">
    <property type="entry name" value="BASIC"/>
    <property type="match status" value="1"/>
</dbReference>
<dbReference type="SMART" id="SM00353">
    <property type="entry name" value="HLH"/>
    <property type="match status" value="1"/>
</dbReference>
<dbReference type="SUPFAM" id="SSF47459">
    <property type="entry name" value="HLH, helix-loop-helix DNA-binding domain"/>
    <property type="match status" value="1"/>
</dbReference>
<dbReference type="PROSITE" id="PS50888">
    <property type="entry name" value="BHLH"/>
    <property type="match status" value="1"/>
</dbReference>
<sequence length="242" mass="26953">MMMDLFETGSYFFYLDGENVTLQPLEVAEGSPLYPGSDGTLSPCQDQMPPEAGSDSSGEEHVLAPPGLQPPHCPGQCLIWACKTCKRKSAPTDRRKAATLRERRRLKKINEAFEALKRRTVANPNQRLPKVEILRSAISYIERLQDLLHRLDQQEKMQELGVDPFSYRPKQENLEGADFLRTCSSQWPSVSDHSRGLVITAKEGGASIDSSASSSLRCLSSIVDSISSEERKLPCVEEVVEK</sequence>
<proteinExistence type="evidence at protein level"/>
<comment type="function">
    <text>Involved in muscle differentiation (myogenic factor). Induces fibroblasts to differentiate into myoblasts. Probable sequence specific DNA-binding protein.</text>
</comment>
<comment type="subunit">
    <text evidence="1">Efficient DNA binding requires dimerization with another bHLH protein. Interacts with CSRP3.</text>
</comment>
<comment type="interaction">
    <interactant intactId="EBI-5659266">
        <id>P23409</id>
    </interactant>
    <interactant intactId="EBI-722877">
        <id>Q99081</id>
        <label>TCF12</label>
    </interactant>
    <organismsDiffer>false</organismsDiffer>
    <experiments>3</experiments>
</comment>
<comment type="subcellular location">
    <subcellularLocation>
        <location>Nucleus</location>
    </subcellularLocation>
</comment>
<comment type="tissue specificity">
    <text>Skeletal muscle.</text>
</comment>
<protein>
    <recommendedName>
        <fullName>Myogenic factor 6</fullName>
        <shortName>Myf-6</shortName>
    </recommendedName>
    <alternativeName>
        <fullName>Class C basic helix-loop-helix protein 4</fullName>
        <shortName>bHLHc4</shortName>
    </alternativeName>
    <alternativeName>
        <fullName>Muscle-specific regulatory factor 4</fullName>
    </alternativeName>
</protein>
<gene>
    <name type="primary">MYF6</name>
    <name type="synonym">BHLHC4</name>
    <name type="synonym">MRF4</name>
</gene>
<keyword id="KW-0217">Developmental protein</keyword>
<keyword id="KW-0221">Differentiation</keyword>
<keyword id="KW-0238">DNA-binding</keyword>
<keyword id="KW-0517">Myogenesis</keyword>
<keyword id="KW-0539">Nucleus</keyword>
<keyword id="KW-1185">Reference proteome</keyword>
<name>MYF6_HUMAN</name>
<reference key="1">
    <citation type="journal article" date="1990" name="EMBO J.">
        <title>Myf-6, a new member of the human gene family of myogenic determination factors: evidence for a gene cluster on chromosome 12.</title>
        <authorList>
            <person name="Braun T."/>
            <person name="Bober E."/>
            <person name="Winter B."/>
            <person name="Rosenthal N."/>
            <person name="Arnold H.H."/>
        </authorList>
    </citation>
    <scope>NUCLEOTIDE SEQUENCE [MRNA]</scope>
</reference>
<reference key="2">
    <citation type="submission" date="2004-05" db="EMBL/GenBank/DDBJ databases">
        <title>Cloning of human full open reading frames in Gateway(TM) system entry vector (pDONR201).</title>
        <authorList>
            <person name="Ebert L."/>
            <person name="Schick M."/>
            <person name="Neubert P."/>
            <person name="Schatten R."/>
            <person name="Henze S."/>
            <person name="Korn B."/>
        </authorList>
    </citation>
    <scope>NUCLEOTIDE SEQUENCE [LARGE SCALE MRNA]</scope>
</reference>
<reference key="3">
    <citation type="submission" date="2004-06" db="EMBL/GenBank/DDBJ databases">
        <title>Cloning of human full open reading frames in Gateway(TM) system entry vector (pDONR201).</title>
        <authorList>
            <person name="Halleck A."/>
            <person name="Ebert L."/>
            <person name="Mkoundinya M."/>
            <person name="Schick M."/>
            <person name="Eisenstein S."/>
            <person name="Neubert P."/>
            <person name="Kstrang K."/>
            <person name="Schatten R."/>
            <person name="Shen B."/>
            <person name="Henze S."/>
            <person name="Mar W."/>
            <person name="Korn B."/>
            <person name="Zuo D."/>
            <person name="Hu Y."/>
            <person name="LaBaer J."/>
        </authorList>
    </citation>
    <scope>NUCLEOTIDE SEQUENCE [LARGE SCALE MRNA]</scope>
</reference>
<reference key="4">
    <citation type="journal article" date="2004" name="Nat. Genet.">
        <title>Complete sequencing and characterization of 21,243 full-length human cDNAs.</title>
        <authorList>
            <person name="Ota T."/>
            <person name="Suzuki Y."/>
            <person name="Nishikawa T."/>
            <person name="Otsuki T."/>
            <person name="Sugiyama T."/>
            <person name="Irie R."/>
            <person name="Wakamatsu A."/>
            <person name="Hayashi K."/>
            <person name="Sato H."/>
            <person name="Nagai K."/>
            <person name="Kimura K."/>
            <person name="Makita H."/>
            <person name="Sekine M."/>
            <person name="Obayashi M."/>
            <person name="Nishi T."/>
            <person name="Shibahara T."/>
            <person name="Tanaka T."/>
            <person name="Ishii S."/>
            <person name="Yamamoto J."/>
            <person name="Saito K."/>
            <person name="Kawai Y."/>
            <person name="Isono Y."/>
            <person name="Nakamura Y."/>
            <person name="Nagahari K."/>
            <person name="Murakami K."/>
            <person name="Yasuda T."/>
            <person name="Iwayanagi T."/>
            <person name="Wagatsuma M."/>
            <person name="Shiratori A."/>
            <person name="Sudo H."/>
            <person name="Hosoiri T."/>
            <person name="Kaku Y."/>
            <person name="Kodaira H."/>
            <person name="Kondo H."/>
            <person name="Sugawara M."/>
            <person name="Takahashi M."/>
            <person name="Kanda K."/>
            <person name="Yokoi T."/>
            <person name="Furuya T."/>
            <person name="Kikkawa E."/>
            <person name="Omura Y."/>
            <person name="Abe K."/>
            <person name="Kamihara K."/>
            <person name="Katsuta N."/>
            <person name="Sato K."/>
            <person name="Tanikawa M."/>
            <person name="Yamazaki M."/>
            <person name="Ninomiya K."/>
            <person name="Ishibashi T."/>
            <person name="Yamashita H."/>
            <person name="Murakawa K."/>
            <person name="Fujimori K."/>
            <person name="Tanai H."/>
            <person name="Kimata M."/>
            <person name="Watanabe M."/>
            <person name="Hiraoka S."/>
            <person name="Chiba Y."/>
            <person name="Ishida S."/>
            <person name="Ono Y."/>
            <person name="Takiguchi S."/>
            <person name="Watanabe S."/>
            <person name="Yosida M."/>
            <person name="Hotuta T."/>
            <person name="Kusano J."/>
            <person name="Kanehori K."/>
            <person name="Takahashi-Fujii A."/>
            <person name="Hara H."/>
            <person name="Tanase T.-O."/>
            <person name="Nomura Y."/>
            <person name="Togiya S."/>
            <person name="Komai F."/>
            <person name="Hara R."/>
            <person name="Takeuchi K."/>
            <person name="Arita M."/>
            <person name="Imose N."/>
            <person name="Musashino K."/>
            <person name="Yuuki H."/>
            <person name="Oshima A."/>
            <person name="Sasaki N."/>
            <person name="Aotsuka S."/>
            <person name="Yoshikawa Y."/>
            <person name="Matsunawa H."/>
            <person name="Ichihara T."/>
            <person name="Shiohata N."/>
            <person name="Sano S."/>
            <person name="Moriya S."/>
            <person name="Momiyama H."/>
            <person name="Satoh N."/>
            <person name="Takami S."/>
            <person name="Terashima Y."/>
            <person name="Suzuki O."/>
            <person name="Nakagawa S."/>
            <person name="Senoh A."/>
            <person name="Mizoguchi H."/>
            <person name="Goto Y."/>
            <person name="Shimizu F."/>
            <person name="Wakebe H."/>
            <person name="Hishigaki H."/>
            <person name="Watanabe T."/>
            <person name="Sugiyama A."/>
            <person name="Takemoto M."/>
            <person name="Kawakami B."/>
            <person name="Yamazaki M."/>
            <person name="Watanabe K."/>
            <person name="Kumagai A."/>
            <person name="Itakura S."/>
            <person name="Fukuzumi Y."/>
            <person name="Fujimori Y."/>
            <person name="Komiyama M."/>
            <person name="Tashiro H."/>
            <person name="Tanigami A."/>
            <person name="Fujiwara T."/>
            <person name="Ono T."/>
            <person name="Yamada K."/>
            <person name="Fujii Y."/>
            <person name="Ozaki K."/>
            <person name="Hirao M."/>
            <person name="Ohmori Y."/>
            <person name="Kawabata A."/>
            <person name="Hikiji T."/>
            <person name="Kobatake N."/>
            <person name="Inagaki H."/>
            <person name="Ikema Y."/>
            <person name="Okamoto S."/>
            <person name="Okitani R."/>
            <person name="Kawakami T."/>
            <person name="Noguchi S."/>
            <person name="Itoh T."/>
            <person name="Shigeta K."/>
            <person name="Senba T."/>
            <person name="Matsumura K."/>
            <person name="Nakajima Y."/>
            <person name="Mizuno T."/>
            <person name="Morinaga M."/>
            <person name="Sasaki M."/>
            <person name="Togashi T."/>
            <person name="Oyama M."/>
            <person name="Hata H."/>
            <person name="Watanabe M."/>
            <person name="Komatsu T."/>
            <person name="Mizushima-Sugano J."/>
            <person name="Satoh T."/>
            <person name="Shirai Y."/>
            <person name="Takahashi Y."/>
            <person name="Nakagawa K."/>
            <person name="Okumura K."/>
            <person name="Nagase T."/>
            <person name="Nomura N."/>
            <person name="Kikuchi H."/>
            <person name="Masuho Y."/>
            <person name="Yamashita R."/>
            <person name="Nakai K."/>
            <person name="Yada T."/>
            <person name="Nakamura Y."/>
            <person name="Ohara O."/>
            <person name="Isogai T."/>
            <person name="Sugano S."/>
        </authorList>
    </citation>
    <scope>NUCLEOTIDE SEQUENCE [LARGE SCALE MRNA]</scope>
    <source>
        <tissue>Skeletal muscle</tissue>
    </source>
</reference>
<reference key="5">
    <citation type="submission" date="2005-07" db="EMBL/GenBank/DDBJ databases">
        <authorList>
            <person name="Mural R.J."/>
            <person name="Istrail S."/>
            <person name="Sutton G.G."/>
            <person name="Florea L."/>
            <person name="Halpern A.L."/>
            <person name="Mobarry C.M."/>
            <person name="Lippert R."/>
            <person name="Walenz B."/>
            <person name="Shatkay H."/>
            <person name="Dew I."/>
            <person name="Miller J.R."/>
            <person name="Flanigan M.J."/>
            <person name="Edwards N.J."/>
            <person name="Bolanos R."/>
            <person name="Fasulo D."/>
            <person name="Halldorsson B.V."/>
            <person name="Hannenhalli S."/>
            <person name="Turner R."/>
            <person name="Yooseph S."/>
            <person name="Lu F."/>
            <person name="Nusskern D.R."/>
            <person name="Shue B.C."/>
            <person name="Zheng X.H."/>
            <person name="Zhong F."/>
            <person name="Delcher A.L."/>
            <person name="Huson D.H."/>
            <person name="Kravitz S.A."/>
            <person name="Mouchard L."/>
            <person name="Reinert K."/>
            <person name="Remington K.A."/>
            <person name="Clark A.G."/>
            <person name="Waterman M.S."/>
            <person name="Eichler E.E."/>
            <person name="Adams M.D."/>
            <person name="Hunkapiller M.W."/>
            <person name="Myers E.W."/>
            <person name="Venter J.C."/>
        </authorList>
    </citation>
    <scope>NUCLEOTIDE SEQUENCE [LARGE SCALE GENOMIC DNA]</scope>
</reference>
<reference key="6">
    <citation type="journal article" date="2004" name="Genome Res.">
        <title>The status, quality, and expansion of the NIH full-length cDNA project: the Mammalian Gene Collection (MGC).</title>
        <authorList>
            <consortium name="The MGC Project Team"/>
        </authorList>
    </citation>
    <scope>NUCLEOTIDE SEQUENCE [LARGE SCALE MRNA]</scope>
    <source>
        <tissue>Skeletal muscle</tissue>
    </source>
</reference>
<reference key="7">
    <citation type="journal article" date="1998" name="Hum. Mutat.">
        <title>MYF6 mutations resulting in A112S and A90D substitutions in patients with skeletal or cardiac muscle pathology.</title>
        <authorList>
            <person name="Kerst B."/>
            <person name="Perrot A."/>
            <person name="Osterziel K.-J."/>
            <person name="Huebner C."/>
            <person name="Speer A."/>
        </authorList>
    </citation>
    <scope>VARIANTS ASP-90 AND SER-112</scope>
</reference>
<reference key="8">
    <citation type="journal article" date="2000" name="Neuromuscul. Disord.">
        <title>Heterozygous myogenic factor 6 mutation associated with myopathy and severe course of Becker muscular dystrophy.</title>
        <authorList>
            <person name="Kerst B."/>
            <person name="Mennerich D."/>
            <person name="Schuelke M."/>
            <person name="Stoltenburg-Didinger G."/>
            <person name="von Moers A."/>
            <person name="Gossrau R."/>
            <person name="van Landeghem F.K.H."/>
            <person name="Speer A."/>
            <person name="Braun T."/>
            <person name="Huebner C."/>
        </authorList>
    </citation>
    <scope>VARIANT SER-112</scope>
</reference>
<evidence type="ECO:0000250" key="1">
    <source>
        <dbReference type="UniProtKB" id="P19335"/>
    </source>
</evidence>
<evidence type="ECO:0000255" key="2">
    <source>
        <dbReference type="PROSITE-ProRule" id="PRU00981"/>
    </source>
</evidence>
<evidence type="ECO:0000256" key="3">
    <source>
        <dbReference type="SAM" id="MobiDB-lite"/>
    </source>
</evidence>
<evidence type="ECO:0000269" key="4">
    <source>
    </source>
</evidence>
<evidence type="ECO:0000269" key="5">
    <source ref="7"/>
</evidence>
<evidence type="ECO:0000305" key="6"/>
<accession>P23409</accession>
<accession>B2R898</accession>
<accession>Q53X80</accession>
<accession>Q6FHI9</accession>